<gene>
    <name evidence="1" type="primary">gltX</name>
    <name type="ordered locus">Sden_2533</name>
</gene>
<keyword id="KW-0030">Aminoacyl-tRNA synthetase</keyword>
<keyword id="KW-0067">ATP-binding</keyword>
<keyword id="KW-0963">Cytoplasm</keyword>
<keyword id="KW-0436">Ligase</keyword>
<keyword id="KW-0547">Nucleotide-binding</keyword>
<keyword id="KW-0648">Protein biosynthesis</keyword>
<keyword id="KW-1185">Reference proteome</keyword>
<reference key="1">
    <citation type="submission" date="2006-03" db="EMBL/GenBank/DDBJ databases">
        <title>Complete sequence of Shewanella denitrificans OS217.</title>
        <authorList>
            <consortium name="US DOE Joint Genome Institute"/>
            <person name="Copeland A."/>
            <person name="Lucas S."/>
            <person name="Lapidus A."/>
            <person name="Barry K."/>
            <person name="Detter J.C."/>
            <person name="Glavina del Rio T."/>
            <person name="Hammon N."/>
            <person name="Israni S."/>
            <person name="Dalin E."/>
            <person name="Tice H."/>
            <person name="Pitluck S."/>
            <person name="Brettin T."/>
            <person name="Bruce D."/>
            <person name="Han C."/>
            <person name="Tapia R."/>
            <person name="Gilna P."/>
            <person name="Kiss H."/>
            <person name="Schmutz J."/>
            <person name="Larimer F."/>
            <person name="Land M."/>
            <person name="Hauser L."/>
            <person name="Kyrpides N."/>
            <person name="Lykidis A."/>
            <person name="Richardson P."/>
        </authorList>
    </citation>
    <scope>NUCLEOTIDE SEQUENCE [LARGE SCALE GENOMIC DNA]</scope>
    <source>
        <strain>OS217 / ATCC BAA-1090 / DSM 15013</strain>
    </source>
</reference>
<protein>
    <recommendedName>
        <fullName evidence="1">Glutamate--tRNA ligase</fullName>
        <ecNumber evidence="1">6.1.1.17</ecNumber>
    </recommendedName>
    <alternativeName>
        <fullName evidence="1">Glutamyl-tRNA synthetase</fullName>
        <shortName evidence="1">GluRS</shortName>
    </alternativeName>
</protein>
<feature type="chain" id="PRO_0000330997" description="Glutamate--tRNA ligase">
    <location>
        <begin position="1"/>
        <end position="473"/>
    </location>
</feature>
<feature type="short sequence motif" description="'HIGH' region" evidence="1">
    <location>
        <begin position="13"/>
        <end position="23"/>
    </location>
</feature>
<feature type="short sequence motif" description="'KMSKS' region" evidence="1">
    <location>
        <begin position="240"/>
        <end position="244"/>
    </location>
</feature>
<feature type="binding site" evidence="1">
    <location>
        <position position="243"/>
    </location>
    <ligand>
        <name>ATP</name>
        <dbReference type="ChEBI" id="CHEBI:30616"/>
    </ligand>
</feature>
<name>SYE_SHEDO</name>
<dbReference type="EC" id="6.1.1.17" evidence="1"/>
<dbReference type="EMBL" id="CP000302">
    <property type="protein sequence ID" value="ABE55813.1"/>
    <property type="molecule type" value="Genomic_DNA"/>
</dbReference>
<dbReference type="RefSeq" id="WP_011496964.1">
    <property type="nucleotide sequence ID" value="NC_007954.1"/>
</dbReference>
<dbReference type="SMR" id="Q12L63"/>
<dbReference type="STRING" id="318161.Sden_2533"/>
<dbReference type="KEGG" id="sdn:Sden_2533"/>
<dbReference type="eggNOG" id="COG0008">
    <property type="taxonomic scope" value="Bacteria"/>
</dbReference>
<dbReference type="HOGENOM" id="CLU_015768_6_3_6"/>
<dbReference type="OrthoDB" id="9807503at2"/>
<dbReference type="Proteomes" id="UP000001982">
    <property type="component" value="Chromosome"/>
</dbReference>
<dbReference type="GO" id="GO:0005829">
    <property type="term" value="C:cytosol"/>
    <property type="evidence" value="ECO:0007669"/>
    <property type="project" value="TreeGrafter"/>
</dbReference>
<dbReference type="GO" id="GO:0005524">
    <property type="term" value="F:ATP binding"/>
    <property type="evidence" value="ECO:0007669"/>
    <property type="project" value="UniProtKB-UniRule"/>
</dbReference>
<dbReference type="GO" id="GO:0004818">
    <property type="term" value="F:glutamate-tRNA ligase activity"/>
    <property type="evidence" value="ECO:0007669"/>
    <property type="project" value="UniProtKB-UniRule"/>
</dbReference>
<dbReference type="GO" id="GO:0000049">
    <property type="term" value="F:tRNA binding"/>
    <property type="evidence" value="ECO:0007669"/>
    <property type="project" value="InterPro"/>
</dbReference>
<dbReference type="GO" id="GO:0008270">
    <property type="term" value="F:zinc ion binding"/>
    <property type="evidence" value="ECO:0007669"/>
    <property type="project" value="InterPro"/>
</dbReference>
<dbReference type="GO" id="GO:0006424">
    <property type="term" value="P:glutamyl-tRNA aminoacylation"/>
    <property type="evidence" value="ECO:0007669"/>
    <property type="project" value="UniProtKB-UniRule"/>
</dbReference>
<dbReference type="CDD" id="cd00808">
    <property type="entry name" value="GluRS_core"/>
    <property type="match status" value="1"/>
</dbReference>
<dbReference type="FunFam" id="1.10.10.350:FF:000001">
    <property type="entry name" value="Glutamate--tRNA ligase"/>
    <property type="match status" value="1"/>
</dbReference>
<dbReference type="FunFam" id="3.40.50.620:FF:000007">
    <property type="entry name" value="Glutamate--tRNA ligase"/>
    <property type="match status" value="1"/>
</dbReference>
<dbReference type="Gene3D" id="1.10.10.350">
    <property type="match status" value="1"/>
</dbReference>
<dbReference type="Gene3D" id="3.40.50.620">
    <property type="entry name" value="HUPs"/>
    <property type="match status" value="1"/>
</dbReference>
<dbReference type="HAMAP" id="MF_00022">
    <property type="entry name" value="Glu_tRNA_synth_type1"/>
    <property type="match status" value="1"/>
</dbReference>
<dbReference type="InterPro" id="IPR045462">
    <property type="entry name" value="aa-tRNA-synth_I_cd-bd"/>
</dbReference>
<dbReference type="InterPro" id="IPR020751">
    <property type="entry name" value="aa-tRNA-synth_I_codon-bd_sub2"/>
</dbReference>
<dbReference type="InterPro" id="IPR001412">
    <property type="entry name" value="aa-tRNA-synth_I_CS"/>
</dbReference>
<dbReference type="InterPro" id="IPR008925">
    <property type="entry name" value="aa_tRNA-synth_I_cd-bd_sf"/>
</dbReference>
<dbReference type="InterPro" id="IPR004527">
    <property type="entry name" value="Glu-tRNA-ligase_bac/mito"/>
</dbReference>
<dbReference type="InterPro" id="IPR000924">
    <property type="entry name" value="Glu/Gln-tRNA-synth"/>
</dbReference>
<dbReference type="InterPro" id="IPR020058">
    <property type="entry name" value="Glu/Gln-tRNA-synth_Ib_cat-dom"/>
</dbReference>
<dbReference type="InterPro" id="IPR049940">
    <property type="entry name" value="GluQ/Sye"/>
</dbReference>
<dbReference type="InterPro" id="IPR033910">
    <property type="entry name" value="GluRS_core"/>
</dbReference>
<dbReference type="InterPro" id="IPR014729">
    <property type="entry name" value="Rossmann-like_a/b/a_fold"/>
</dbReference>
<dbReference type="NCBIfam" id="TIGR00464">
    <property type="entry name" value="gltX_bact"/>
    <property type="match status" value="1"/>
</dbReference>
<dbReference type="NCBIfam" id="NF004314">
    <property type="entry name" value="PRK05710.1-3"/>
    <property type="match status" value="1"/>
</dbReference>
<dbReference type="PANTHER" id="PTHR43311">
    <property type="entry name" value="GLUTAMATE--TRNA LIGASE"/>
    <property type="match status" value="1"/>
</dbReference>
<dbReference type="PANTHER" id="PTHR43311:SF2">
    <property type="entry name" value="GLUTAMATE--TRNA LIGASE, MITOCHONDRIAL-RELATED"/>
    <property type="match status" value="1"/>
</dbReference>
<dbReference type="Pfam" id="PF19269">
    <property type="entry name" value="Anticodon_2"/>
    <property type="match status" value="1"/>
</dbReference>
<dbReference type="Pfam" id="PF00749">
    <property type="entry name" value="tRNA-synt_1c"/>
    <property type="match status" value="1"/>
</dbReference>
<dbReference type="PRINTS" id="PR00987">
    <property type="entry name" value="TRNASYNTHGLU"/>
</dbReference>
<dbReference type="SUPFAM" id="SSF48163">
    <property type="entry name" value="An anticodon-binding domain of class I aminoacyl-tRNA synthetases"/>
    <property type="match status" value="1"/>
</dbReference>
<dbReference type="SUPFAM" id="SSF52374">
    <property type="entry name" value="Nucleotidylyl transferase"/>
    <property type="match status" value="1"/>
</dbReference>
<dbReference type="PROSITE" id="PS00178">
    <property type="entry name" value="AA_TRNA_LIGASE_I"/>
    <property type="match status" value="1"/>
</dbReference>
<proteinExistence type="inferred from homology"/>
<sequence length="473" mass="53234">MTTPAITKTRFAPSPTGFLHVGGARTALYSWLQARANNGEFVLRIEDTDIERSTQAACDAILDGMNWLGLTWDEGPYYQTKRFDRYHEIIGQMLEKGTAYKCYCSRERIETMREEQAAAGLQQKYDGHCRNLAARETNEPFVIRFKNPLEGSVVFDDHVRGRIEISNEMLDDLIIQRTDGVPTYNFCVVVDDWDMGITSVVRGEDHINNTPRQINILKALGAPIPEYAHVSMILGDDGAKLSKRHGAVGVMQYRDDGYLPEALLNYLVRLGWSHGDQEIFSMEEMKQHFKLGDINKAASAFNTDKLIWLNQHYIKTLDPEYVASHLAWHMEDQNIDTSNGPALAEIVTALSERAKTLKELAESSRYFFEDFTDFDEVQAKKHLRGVALEPLTLVKTKLAALTEWSVSVIHQVIEDTATELEVGMGKVGMPLRVAVTGAGQSPALDLTLFLIGKDRSEQRISKAIDFVADRINS</sequence>
<accession>Q12L63</accession>
<organism>
    <name type="scientific">Shewanella denitrificans (strain OS217 / ATCC BAA-1090 / DSM 15013)</name>
    <dbReference type="NCBI Taxonomy" id="318161"/>
    <lineage>
        <taxon>Bacteria</taxon>
        <taxon>Pseudomonadati</taxon>
        <taxon>Pseudomonadota</taxon>
        <taxon>Gammaproteobacteria</taxon>
        <taxon>Alteromonadales</taxon>
        <taxon>Shewanellaceae</taxon>
        <taxon>Shewanella</taxon>
    </lineage>
</organism>
<comment type="function">
    <text evidence="1">Catalyzes the attachment of glutamate to tRNA(Glu) in a two-step reaction: glutamate is first activated by ATP to form Glu-AMP and then transferred to the acceptor end of tRNA(Glu).</text>
</comment>
<comment type="catalytic activity">
    <reaction evidence="1">
        <text>tRNA(Glu) + L-glutamate + ATP = L-glutamyl-tRNA(Glu) + AMP + diphosphate</text>
        <dbReference type="Rhea" id="RHEA:23540"/>
        <dbReference type="Rhea" id="RHEA-COMP:9663"/>
        <dbReference type="Rhea" id="RHEA-COMP:9680"/>
        <dbReference type="ChEBI" id="CHEBI:29985"/>
        <dbReference type="ChEBI" id="CHEBI:30616"/>
        <dbReference type="ChEBI" id="CHEBI:33019"/>
        <dbReference type="ChEBI" id="CHEBI:78442"/>
        <dbReference type="ChEBI" id="CHEBI:78520"/>
        <dbReference type="ChEBI" id="CHEBI:456215"/>
        <dbReference type="EC" id="6.1.1.17"/>
    </reaction>
</comment>
<comment type="subunit">
    <text evidence="1">Monomer.</text>
</comment>
<comment type="subcellular location">
    <subcellularLocation>
        <location evidence="1">Cytoplasm</location>
    </subcellularLocation>
</comment>
<comment type="similarity">
    <text evidence="1">Belongs to the class-I aminoacyl-tRNA synthetase family. Glutamate--tRNA ligase type 1 subfamily.</text>
</comment>
<evidence type="ECO:0000255" key="1">
    <source>
        <dbReference type="HAMAP-Rule" id="MF_00022"/>
    </source>
</evidence>